<name>RSMA_DEIRA</name>
<reference key="1">
    <citation type="journal article" date="1999" name="Science">
        <title>Genome sequence of the radioresistant bacterium Deinococcus radiodurans R1.</title>
        <authorList>
            <person name="White O."/>
            <person name="Eisen J.A."/>
            <person name="Heidelberg J.F."/>
            <person name="Hickey E.K."/>
            <person name="Peterson J.D."/>
            <person name="Dodson R.J."/>
            <person name="Haft D.H."/>
            <person name="Gwinn M.L."/>
            <person name="Nelson W.C."/>
            <person name="Richardson D.L."/>
            <person name="Moffat K.S."/>
            <person name="Qin H."/>
            <person name="Jiang L."/>
            <person name="Pamphile W."/>
            <person name="Crosby M."/>
            <person name="Shen M."/>
            <person name="Vamathevan J.J."/>
            <person name="Lam P."/>
            <person name="McDonald L.A."/>
            <person name="Utterback T.R."/>
            <person name="Zalewski C."/>
            <person name="Makarova K.S."/>
            <person name="Aravind L."/>
            <person name="Daly M.J."/>
            <person name="Minton K.W."/>
            <person name="Fleischmann R.D."/>
            <person name="Ketchum K.A."/>
            <person name="Nelson K.E."/>
            <person name="Salzberg S.L."/>
            <person name="Smith H.O."/>
            <person name="Venter J.C."/>
            <person name="Fraser C.M."/>
        </authorList>
    </citation>
    <scope>NUCLEOTIDE SEQUENCE [LARGE SCALE GENOMIC DNA]</scope>
    <source>
        <strain>ATCC 13939 / DSM 20539 / JCM 16871 / CCUG 27074 / LMG 4051 / NBRC 15346 / NCIMB 9279 / VKM B-1422 / R1</strain>
    </source>
</reference>
<feature type="chain" id="PRO_0000101521" description="Ribosomal RNA small subunit methyltransferase A">
    <location>
        <begin position="1"/>
        <end position="292"/>
    </location>
</feature>
<feature type="binding site" evidence="1">
    <location>
        <position position="46"/>
    </location>
    <ligand>
        <name>S-adenosyl-L-methionine</name>
        <dbReference type="ChEBI" id="CHEBI:59789"/>
    </ligand>
</feature>
<feature type="binding site" evidence="1">
    <location>
        <position position="48"/>
    </location>
    <ligand>
        <name>S-adenosyl-L-methionine</name>
        <dbReference type="ChEBI" id="CHEBI:59789"/>
    </ligand>
</feature>
<feature type="binding site" evidence="1">
    <location>
        <position position="73"/>
    </location>
    <ligand>
        <name>S-adenosyl-L-methionine</name>
        <dbReference type="ChEBI" id="CHEBI:59789"/>
    </ligand>
</feature>
<feature type="binding site" evidence="1">
    <location>
        <position position="94"/>
    </location>
    <ligand>
        <name>S-adenosyl-L-methionine</name>
        <dbReference type="ChEBI" id="CHEBI:59789"/>
    </ligand>
</feature>
<feature type="binding site" evidence="1">
    <location>
        <position position="118"/>
    </location>
    <ligand>
        <name>S-adenosyl-L-methionine</name>
        <dbReference type="ChEBI" id="CHEBI:59789"/>
    </ligand>
</feature>
<feature type="binding site" evidence="1">
    <location>
        <position position="136"/>
    </location>
    <ligand>
        <name>S-adenosyl-L-methionine</name>
        <dbReference type="ChEBI" id="CHEBI:59789"/>
    </ligand>
</feature>
<sequence length="292" mass="31018">MTPNPMTNDLPDPAAAPDSAPLYSPARVRALLAAHGLKPTKSLGQNFLIDGNILRAIAEAGGAAPGENVLEIGPGLGVLTREVASRGARVTALEKDERLRPVLAETLAGLDVNVIWGDALDFDYAALPAGTRVIANLPYYITGLLLTRFMQAPGVVSATVLVQKEVAQRLVAQPGQDNYGFLSAVAALYGSVKHVRDVPKGAFFPAPDVTSSVVRLDFDRTRPQPDPAFVSFVDNALRYRRKTLRNNLRMMGHSGEAIDAALSDLGLRPDVRAEDVPLSGLRAVAAALGVVR</sequence>
<comment type="function">
    <text evidence="1">Specifically dimethylates two adjacent adenosines (A1518 and A1519) in the loop of a conserved hairpin near the 3'-end of 16S rRNA in the 30S particle. May play a critical role in biogenesis of 30S subunits.</text>
</comment>
<comment type="catalytic activity">
    <reaction evidence="1">
        <text>adenosine(1518)/adenosine(1519) in 16S rRNA + 4 S-adenosyl-L-methionine = N(6)-dimethyladenosine(1518)/N(6)-dimethyladenosine(1519) in 16S rRNA + 4 S-adenosyl-L-homocysteine + 4 H(+)</text>
        <dbReference type="Rhea" id="RHEA:19609"/>
        <dbReference type="Rhea" id="RHEA-COMP:10232"/>
        <dbReference type="Rhea" id="RHEA-COMP:10233"/>
        <dbReference type="ChEBI" id="CHEBI:15378"/>
        <dbReference type="ChEBI" id="CHEBI:57856"/>
        <dbReference type="ChEBI" id="CHEBI:59789"/>
        <dbReference type="ChEBI" id="CHEBI:74411"/>
        <dbReference type="ChEBI" id="CHEBI:74493"/>
        <dbReference type="EC" id="2.1.1.182"/>
    </reaction>
</comment>
<comment type="subcellular location">
    <subcellularLocation>
        <location evidence="1">Cytoplasm</location>
    </subcellularLocation>
</comment>
<comment type="similarity">
    <text evidence="1">Belongs to the class I-like SAM-binding methyltransferase superfamily. rRNA adenine N(6)-methyltransferase family. RsmA subfamily.</text>
</comment>
<comment type="sequence caution" evidence="2">
    <conflict type="erroneous initiation">
        <sequence resource="EMBL-CDS" id="AAF11091"/>
    </conflict>
</comment>
<accession>Q9RU68</accession>
<keyword id="KW-0963">Cytoplasm</keyword>
<keyword id="KW-0489">Methyltransferase</keyword>
<keyword id="KW-1185">Reference proteome</keyword>
<keyword id="KW-0694">RNA-binding</keyword>
<keyword id="KW-0698">rRNA processing</keyword>
<keyword id="KW-0949">S-adenosyl-L-methionine</keyword>
<keyword id="KW-0808">Transferase</keyword>
<protein>
    <recommendedName>
        <fullName evidence="1">Ribosomal RNA small subunit methyltransferase A</fullName>
        <ecNumber evidence="1">2.1.1.182</ecNumber>
    </recommendedName>
    <alternativeName>
        <fullName evidence="1">16S rRNA (adenine(1518)-N(6)/adenine(1519)-N(6))-dimethyltransferase</fullName>
    </alternativeName>
    <alternativeName>
        <fullName evidence="1">16S rRNA dimethyladenosine transferase</fullName>
    </alternativeName>
    <alternativeName>
        <fullName evidence="1">16S rRNA dimethylase</fullName>
    </alternativeName>
    <alternativeName>
        <fullName evidence="1">S-adenosylmethionine-6-N', N'-adenosyl(rRNA) dimethyltransferase</fullName>
    </alternativeName>
</protein>
<gene>
    <name evidence="1" type="primary">rsmA</name>
    <name evidence="1" type="synonym">ksgA</name>
    <name type="ordered locus">DR_1526</name>
</gene>
<organism>
    <name type="scientific">Deinococcus radiodurans (strain ATCC 13939 / DSM 20539 / JCM 16871 / CCUG 27074 / LMG 4051 / NBRC 15346 / NCIMB 9279 / VKM B-1422 / R1)</name>
    <dbReference type="NCBI Taxonomy" id="243230"/>
    <lineage>
        <taxon>Bacteria</taxon>
        <taxon>Thermotogati</taxon>
        <taxon>Deinococcota</taxon>
        <taxon>Deinococci</taxon>
        <taxon>Deinococcales</taxon>
        <taxon>Deinococcaceae</taxon>
        <taxon>Deinococcus</taxon>
    </lineage>
</organism>
<proteinExistence type="inferred from homology"/>
<evidence type="ECO:0000255" key="1">
    <source>
        <dbReference type="HAMAP-Rule" id="MF_00607"/>
    </source>
</evidence>
<evidence type="ECO:0000305" key="2"/>
<dbReference type="EC" id="2.1.1.182" evidence="1"/>
<dbReference type="EMBL" id="AE000513">
    <property type="protein sequence ID" value="AAF11091.1"/>
    <property type="status" value="ALT_INIT"/>
    <property type="molecule type" value="Genomic_DNA"/>
</dbReference>
<dbReference type="PIR" id="F75385">
    <property type="entry name" value="F75385"/>
</dbReference>
<dbReference type="RefSeq" id="NP_295249.1">
    <property type="nucleotide sequence ID" value="NC_001263.1"/>
</dbReference>
<dbReference type="RefSeq" id="WP_051618805.1">
    <property type="nucleotide sequence ID" value="NC_001263.1"/>
</dbReference>
<dbReference type="SMR" id="Q9RU68"/>
<dbReference type="FunCoup" id="Q9RU68">
    <property type="interactions" value="411"/>
</dbReference>
<dbReference type="STRING" id="243230.DR_1526"/>
<dbReference type="PaxDb" id="243230-DR_1526"/>
<dbReference type="EnsemblBacteria" id="AAF11091">
    <property type="protein sequence ID" value="AAF11091"/>
    <property type="gene ID" value="DR_1526"/>
</dbReference>
<dbReference type="GeneID" id="69517765"/>
<dbReference type="KEGG" id="dra:DR_1526"/>
<dbReference type="PATRIC" id="fig|243230.17.peg.1729"/>
<dbReference type="eggNOG" id="COG0030">
    <property type="taxonomic scope" value="Bacteria"/>
</dbReference>
<dbReference type="HOGENOM" id="CLU_041220_0_0_0"/>
<dbReference type="InParanoid" id="Q9RU68"/>
<dbReference type="OrthoDB" id="9814755at2"/>
<dbReference type="Proteomes" id="UP000002524">
    <property type="component" value="Chromosome 1"/>
</dbReference>
<dbReference type="GO" id="GO:0005829">
    <property type="term" value="C:cytosol"/>
    <property type="evidence" value="ECO:0000318"/>
    <property type="project" value="GO_Central"/>
</dbReference>
<dbReference type="GO" id="GO:0052908">
    <property type="term" value="F:16S rRNA (adenine(1518)-N(6)/adenine(1519)-N(6))-dimethyltransferase activity"/>
    <property type="evidence" value="ECO:0007669"/>
    <property type="project" value="UniProtKB-EC"/>
</dbReference>
<dbReference type="GO" id="GO:0003723">
    <property type="term" value="F:RNA binding"/>
    <property type="evidence" value="ECO:0007669"/>
    <property type="project" value="UniProtKB-KW"/>
</dbReference>
<dbReference type="GO" id="GO:0000179">
    <property type="term" value="F:rRNA (adenine-N6,N6-)-dimethyltransferase activity"/>
    <property type="evidence" value="ECO:0000318"/>
    <property type="project" value="GO_Central"/>
</dbReference>
<dbReference type="GO" id="GO:0031167">
    <property type="term" value="P:rRNA methylation"/>
    <property type="evidence" value="ECO:0000318"/>
    <property type="project" value="GO_Central"/>
</dbReference>
<dbReference type="CDD" id="cd02440">
    <property type="entry name" value="AdoMet_MTases"/>
    <property type="match status" value="1"/>
</dbReference>
<dbReference type="FunFam" id="3.40.50.150:FF:000023">
    <property type="entry name" value="Ribosomal RNA small subunit methyltransferase A"/>
    <property type="match status" value="1"/>
</dbReference>
<dbReference type="Gene3D" id="1.10.8.100">
    <property type="entry name" value="Ribosomal RNA adenine dimethylase-like, domain 2"/>
    <property type="match status" value="1"/>
</dbReference>
<dbReference type="Gene3D" id="3.40.50.150">
    <property type="entry name" value="Vaccinia Virus protein VP39"/>
    <property type="match status" value="1"/>
</dbReference>
<dbReference type="HAMAP" id="MF_00607">
    <property type="entry name" value="16SrRNA_methyltr_A"/>
    <property type="match status" value="1"/>
</dbReference>
<dbReference type="InterPro" id="IPR001737">
    <property type="entry name" value="KsgA/Erm"/>
</dbReference>
<dbReference type="InterPro" id="IPR023165">
    <property type="entry name" value="rRNA_Ade_diMease-like_C"/>
</dbReference>
<dbReference type="InterPro" id="IPR020596">
    <property type="entry name" value="rRNA_Ade_Mease_Trfase_CS"/>
</dbReference>
<dbReference type="InterPro" id="IPR020598">
    <property type="entry name" value="rRNA_Ade_methylase_Trfase_N"/>
</dbReference>
<dbReference type="InterPro" id="IPR011530">
    <property type="entry name" value="rRNA_adenine_dimethylase"/>
</dbReference>
<dbReference type="InterPro" id="IPR029063">
    <property type="entry name" value="SAM-dependent_MTases_sf"/>
</dbReference>
<dbReference type="NCBIfam" id="TIGR00755">
    <property type="entry name" value="ksgA"/>
    <property type="match status" value="1"/>
</dbReference>
<dbReference type="PANTHER" id="PTHR11727">
    <property type="entry name" value="DIMETHYLADENOSINE TRANSFERASE"/>
    <property type="match status" value="1"/>
</dbReference>
<dbReference type="PANTHER" id="PTHR11727:SF7">
    <property type="entry name" value="DIMETHYLADENOSINE TRANSFERASE-RELATED"/>
    <property type="match status" value="1"/>
</dbReference>
<dbReference type="Pfam" id="PF00398">
    <property type="entry name" value="RrnaAD"/>
    <property type="match status" value="1"/>
</dbReference>
<dbReference type="SMART" id="SM00650">
    <property type="entry name" value="rADc"/>
    <property type="match status" value="1"/>
</dbReference>
<dbReference type="SUPFAM" id="SSF53335">
    <property type="entry name" value="S-adenosyl-L-methionine-dependent methyltransferases"/>
    <property type="match status" value="1"/>
</dbReference>
<dbReference type="PROSITE" id="PS01131">
    <property type="entry name" value="RRNA_A_DIMETH"/>
    <property type="match status" value="1"/>
</dbReference>
<dbReference type="PROSITE" id="PS51689">
    <property type="entry name" value="SAM_RNA_A_N6_MT"/>
    <property type="match status" value="1"/>
</dbReference>